<proteinExistence type="evidence at protein level"/>
<accession>P85329</accession>
<name>PG4J2_BISBO</name>
<feature type="chain" id="PRO_0000314063" description="Unknown placental glycoprotein 45J2">
    <location>
        <begin position="1"/>
        <end position="17" status="greater than"/>
    </location>
</feature>
<feature type="non-terminal residue" evidence="2">
    <location>
        <position position="17"/>
    </location>
</feature>
<reference key="1">
    <citation type="journal article" date="2009" name="Anim. Reprod. Sci.">
        <title>Identification of multiple pregnancy-associated glycoproteins (PAGs) purified from the European bison (Eb; Bison bonasus L.) placentas.</title>
        <authorList>
            <person name="Kiewisz J."/>
            <person name="Melo de Sousa N."/>
            <person name="Beckers J.-F.M.P."/>
            <person name="Panasiewicz G."/>
            <person name="Gizejewski Z."/>
            <person name="Szafranska B."/>
        </authorList>
    </citation>
    <scope>PROTEIN SEQUENCE</scope>
    <scope>TISSUE SPECIFICITY</scope>
    <scope>DEVELOPMENTAL STAGE</scope>
    <scope>GLYCOSYLATION</scope>
    <source>
        <tissue>Placenta</tissue>
    </source>
</reference>
<keyword id="KW-0903">Direct protein sequencing</keyword>
<keyword id="KW-0325">Glycoprotein</keyword>
<protein>
    <recommendedName>
        <fullName>Unknown placental glycoprotein 45J2</fullName>
    </recommendedName>
</protein>
<organism>
    <name type="scientific">Bison bonasus</name>
    <name type="common">European bison</name>
    <dbReference type="NCBI Taxonomy" id="9902"/>
    <lineage>
        <taxon>Eukaryota</taxon>
        <taxon>Metazoa</taxon>
        <taxon>Chordata</taxon>
        <taxon>Craniata</taxon>
        <taxon>Vertebrata</taxon>
        <taxon>Euteleostomi</taxon>
        <taxon>Mammalia</taxon>
        <taxon>Eutheria</taxon>
        <taxon>Laurasiatheria</taxon>
        <taxon>Artiodactyla</taxon>
        <taxon>Ruminantia</taxon>
        <taxon>Pecora</taxon>
        <taxon>Bovidae</taxon>
        <taxon>Bovinae</taxon>
        <taxon>Bison</taxon>
    </lineage>
</organism>
<comment type="tissue specificity">
    <text evidence="1">Chorionic epithelium (trophectoderm) and placental cotyledons.</text>
</comment>
<comment type="developmental stage">
    <text evidence="1">Expressed at 120 dpc.</text>
</comment>
<comment type="PTM">
    <text evidence="1">Glycosylated.</text>
</comment>
<comment type="miscellaneous">
    <text evidence="1">On the 2D-gel the determined pI of this protein is: 7.4, its MW is: 45 kDa.</text>
</comment>
<evidence type="ECO:0000269" key="1">
    <source>
    </source>
</evidence>
<evidence type="ECO:0000303" key="2">
    <source>
    </source>
</evidence>
<sequence>SKDNQKNYIPLIVPFAT</sequence>